<organism>
    <name type="scientific">Methanocaldococcus jannaschii (strain ATCC 43067 / DSM 2661 / JAL-1 / JCM 10045 / NBRC 100440)</name>
    <name type="common">Methanococcus jannaschii</name>
    <dbReference type="NCBI Taxonomy" id="243232"/>
    <lineage>
        <taxon>Archaea</taxon>
        <taxon>Methanobacteriati</taxon>
        <taxon>Methanobacteriota</taxon>
        <taxon>Methanomada group</taxon>
        <taxon>Methanococci</taxon>
        <taxon>Methanococcales</taxon>
        <taxon>Methanocaldococcaceae</taxon>
        <taxon>Methanocaldococcus</taxon>
    </lineage>
</organism>
<evidence type="ECO:0000250" key="1">
    <source>
        <dbReference type="UniProtKB" id="B9KDD4"/>
    </source>
</evidence>
<evidence type="ECO:0000250" key="2">
    <source>
        <dbReference type="UniProtKB" id="O29867"/>
    </source>
</evidence>
<evidence type="ECO:0000250" key="3">
    <source>
        <dbReference type="UniProtKB" id="O29918"/>
    </source>
</evidence>
<evidence type="ECO:0000250" key="4">
    <source>
        <dbReference type="UniProtKB" id="Q2EMT4"/>
    </source>
</evidence>
<evidence type="ECO:0000255" key="5"/>
<evidence type="ECO:0000305" key="6"/>
<keyword id="KW-1003">Cell membrane</keyword>
<keyword id="KW-0328">Glycosyltransferase</keyword>
<keyword id="KW-0460">Magnesium</keyword>
<keyword id="KW-0464">Manganese</keyword>
<keyword id="KW-0472">Membrane</keyword>
<keyword id="KW-0479">Metal-binding</keyword>
<keyword id="KW-1185">Reference proteome</keyword>
<keyword id="KW-0808">Transferase</keyword>
<keyword id="KW-0812">Transmembrane</keyword>
<keyword id="KW-1133">Transmembrane helix</keyword>
<gene>
    <name type="primary">aglB</name>
    <name type="ordered locus">MJ1525</name>
</gene>
<accession>Q58920</accession>
<protein>
    <recommendedName>
        <fullName>Dolichyl-phosphooligosaccharide-protein glycotransferase</fullName>
        <ecNumber>2.4.99.21</ecNumber>
    </recommendedName>
    <alternativeName>
        <fullName>Oligosaccharyl transferase</fullName>
        <shortName>OST</shortName>
        <shortName>OTase</shortName>
    </alternativeName>
</protein>
<feature type="chain" id="PRO_0000107392" description="Dolichyl-phosphooligosaccharide-protein glycotransferase">
    <location>
        <begin position="1"/>
        <end position="933"/>
    </location>
</feature>
<feature type="topological domain" description="Cytoplasmic" evidence="6">
    <location>
        <begin position="1"/>
        <end position="22"/>
    </location>
</feature>
<feature type="transmembrane region" description="Helical" evidence="5">
    <location>
        <begin position="23"/>
        <end position="43"/>
    </location>
</feature>
<feature type="topological domain" description="Extracellular" evidence="6">
    <location>
        <begin position="44"/>
        <end position="146"/>
    </location>
</feature>
<feature type="transmembrane region" description="Helical" evidence="5">
    <location>
        <begin position="147"/>
        <end position="167"/>
    </location>
</feature>
<feature type="topological domain" description="Cytoplasmic" evidence="6">
    <location>
        <begin position="168"/>
        <end position="174"/>
    </location>
</feature>
<feature type="transmembrane region" description="Helical" evidence="5">
    <location>
        <begin position="175"/>
        <end position="195"/>
    </location>
</feature>
<feature type="topological domain" description="Extracellular" evidence="6">
    <location>
        <position position="196"/>
    </location>
</feature>
<feature type="transmembrane region" description="Helical" evidence="5">
    <location>
        <begin position="197"/>
        <end position="217"/>
    </location>
</feature>
<feature type="topological domain" description="Cytoplasmic" evidence="6">
    <location>
        <begin position="218"/>
        <end position="236"/>
    </location>
</feature>
<feature type="transmembrane region" description="Helical" evidence="5">
    <location>
        <begin position="237"/>
        <end position="257"/>
    </location>
</feature>
<feature type="topological domain" description="Extracellular" evidence="6">
    <location>
        <begin position="258"/>
        <end position="263"/>
    </location>
</feature>
<feature type="transmembrane region" description="Helical" evidence="5">
    <location>
        <begin position="264"/>
        <end position="284"/>
    </location>
</feature>
<feature type="topological domain" description="Cytoplasmic" evidence="6">
    <location>
        <begin position="285"/>
        <end position="296"/>
    </location>
</feature>
<feature type="transmembrane region" description="Helical" evidence="5">
    <location>
        <begin position="297"/>
        <end position="317"/>
    </location>
</feature>
<feature type="topological domain" description="Extracellular" evidence="6">
    <location>
        <position position="318"/>
    </location>
</feature>
<feature type="transmembrane region" description="Helical" evidence="5">
    <location>
        <begin position="319"/>
        <end position="339"/>
    </location>
</feature>
<feature type="topological domain" description="Cytoplasmic" evidence="6">
    <location>
        <begin position="340"/>
        <end position="361"/>
    </location>
</feature>
<feature type="transmembrane region" description="Helical" evidence="5">
    <location>
        <begin position="362"/>
        <end position="382"/>
    </location>
</feature>
<feature type="topological domain" description="Extracellular" evidence="6">
    <location>
        <begin position="383"/>
        <end position="427"/>
    </location>
</feature>
<feature type="transmembrane region" description="Helical" evidence="5">
    <location>
        <begin position="428"/>
        <end position="448"/>
    </location>
</feature>
<feature type="topological domain" description="Cytoplasmic" evidence="6">
    <location>
        <begin position="449"/>
        <end position="454"/>
    </location>
</feature>
<feature type="transmembrane region" description="Helical" evidence="5">
    <location>
        <begin position="455"/>
        <end position="475"/>
    </location>
</feature>
<feature type="topological domain" description="Extracellular" evidence="6">
    <location>
        <begin position="476"/>
        <end position="479"/>
    </location>
</feature>
<feature type="transmembrane region" description="Helical" evidence="5">
    <location>
        <begin position="480"/>
        <end position="500"/>
    </location>
</feature>
<feature type="topological domain" description="Cytoplasmic" evidence="6">
    <location>
        <begin position="501"/>
        <end position="581"/>
    </location>
</feature>
<feature type="transmembrane region" description="Helical" evidence="5">
    <location>
        <begin position="582"/>
        <end position="602"/>
    </location>
</feature>
<feature type="topological domain" description="Extracellular" evidence="6">
    <location>
        <begin position="603"/>
        <end position="933"/>
    </location>
</feature>
<feature type="region of interest" description="Interacts with target acceptor peptide in protein substrate" evidence="1">
    <location>
        <begin position="629"/>
        <end position="631"/>
    </location>
</feature>
<feature type="short sequence motif" description="DXD motif 1" evidence="1">
    <location>
        <begin position="72"/>
        <end position="74"/>
    </location>
</feature>
<feature type="short sequence motif" description="DXD motif 2" evidence="1">
    <location>
        <begin position="200"/>
        <end position="202"/>
    </location>
</feature>
<feature type="short sequence motif" description="TIXE motif" evidence="2">
    <location>
        <begin position="410"/>
        <end position="413"/>
    </location>
</feature>
<feature type="short sequence motif" description="WWDYG motif" evidence="3">
    <location>
        <begin position="629"/>
        <end position="633"/>
    </location>
</feature>
<feature type="short sequence motif" description="MI motif" evidence="3">
    <location>
        <begin position="756"/>
        <end position="763"/>
    </location>
</feature>
<feature type="binding site" evidence="1">
    <location>
        <position position="74"/>
    </location>
    <ligand>
        <name>Mn(2+)</name>
        <dbReference type="ChEBI" id="CHEBI:29035"/>
    </ligand>
</feature>
<feature type="binding site" evidence="1">
    <location>
        <position position="200"/>
    </location>
    <ligand>
        <name>Mn(2+)</name>
        <dbReference type="ChEBI" id="CHEBI:29035"/>
    </ligand>
</feature>
<feature type="binding site" evidence="1">
    <location>
        <position position="413"/>
    </location>
    <ligand>
        <name>Mn(2+)</name>
        <dbReference type="ChEBI" id="CHEBI:29035"/>
    </ligand>
</feature>
<feature type="binding site" evidence="1">
    <location>
        <position position="479"/>
    </location>
    <ligand>
        <name>a glycophospholipid</name>
        <dbReference type="ChEBI" id="CHEBI:24397"/>
        <note>archaeal dolichyl phosphooligosaccharide</note>
    </ligand>
</feature>
<feature type="site" description="Interacts with target acceptor peptide in protein substrate" evidence="1">
    <location>
        <position position="74"/>
    </location>
</feature>
<feature type="site" description="Important for catalytic activity" evidence="1">
    <location>
        <position position="193"/>
    </location>
</feature>
<feature type="site" description="Interacts with target acceptor peptide in protein substrate" evidence="1">
    <location>
        <position position="413"/>
    </location>
</feature>
<feature type="site" description="Interacts with target acceptor peptide in protein substrate" evidence="1">
    <location>
        <position position="759"/>
    </location>
</feature>
<proteinExistence type="inferred from homology"/>
<sequence>MYIKVKLMSNALEKINNFFKEKSWIKVFLIILMLMFVSFQLRAQTADMKFAQDNEFLKDMFSDEHGRMYLLALDPYYYLRLSENLYNNGHCGDTIKVVDGKETPYDLYQYAPPGHPLPWEPPVICLATLAIYYIWHSIDLTVTIMNAAFWVPAVLGMLLGIPIYFVVRRVTNSNIGGIAGAIALISAPGLLYKTCAGFADTPIFEVLPILFIVWFILESIHSQEKTALFKKDLKNPISLFVIAALIIELIIGAYLNIASGESVVIASILFYTVSLAFILAGLIIAGIKKLKGNELEFELFALLAVILTAVSPKMWGAWWYGFDVITAFLVIYIIALALLKSQVKIKEFINIGNLKNIVYLSIFYIFGSFVLLVAIYGMGIAISPITSPLGYNQILSTYTQTTGWPNVYTTVAELAKPSSWSEIFTNAIGSDTIAIVGILGILLSFLSLRYEKVKLDIKYSILLAIWLAVTLYAATKGIRFAALATPPLAIGLGIFVGQLERFLKMKSDIAIFGIGIPAGIFGLLILSKYSAKISQILLPTTYVPIIAYGFLIVLALLAIYKISDIISTLNDKKETIIKVSTLLLCIGVVIPPLSAVVPFSVAPTFNNGWKEGLDWIKANTPNNSVITCWWDNGHIYTYEARRMVTFDGGSQNSPRAYWVGRAFATSNENLSIGIIRMLATSGDEAFKKGSVLMNFTHNNVSKTVKILNEILPVDRSKAYDILTKKYGLSDKKAKLVLNATHPEHPNPDYLITYNRMTDIAPVWSMFGFWNFSLPPNTPNDKREKGAFFKGTAYYLGNGTILANVNVYTYSYVTLINSTNISTAIVQKINGQAKIIGTFKIHKLYIKTPLGVKELVLNKDGQLSEFIRIEADGRGYAWLATRNLEDSIYAKLHFLDGYGLKHIKLVKATIDPTDFGIQPGFKIYKVDYGTDYLK</sequence>
<dbReference type="EC" id="2.4.99.21"/>
<dbReference type="EMBL" id="L77117">
    <property type="protein sequence ID" value="AAB99543.1"/>
    <property type="molecule type" value="Genomic_DNA"/>
</dbReference>
<dbReference type="PIR" id="D64490">
    <property type="entry name" value="D64490"/>
</dbReference>
<dbReference type="FunCoup" id="Q58920">
    <property type="interactions" value="109"/>
</dbReference>
<dbReference type="STRING" id="243232.MJ_1525"/>
<dbReference type="CAZy" id="GT66">
    <property type="family name" value="Glycosyltransferase Family 66"/>
</dbReference>
<dbReference type="PaxDb" id="243232-MJ_1525"/>
<dbReference type="EnsemblBacteria" id="AAB99543">
    <property type="protein sequence ID" value="AAB99543"/>
    <property type="gene ID" value="MJ_1525"/>
</dbReference>
<dbReference type="KEGG" id="mja:MJ_1525"/>
<dbReference type="eggNOG" id="arCOG02044">
    <property type="taxonomic scope" value="Archaea"/>
</dbReference>
<dbReference type="HOGENOM" id="CLU_018380_0_0_2"/>
<dbReference type="InParanoid" id="Q58920"/>
<dbReference type="OrthoDB" id="82393at2157"/>
<dbReference type="BRENDA" id="2.4.99.18">
    <property type="organism ID" value="3260"/>
</dbReference>
<dbReference type="UniPathway" id="UPA00378"/>
<dbReference type="UniPathway" id="UPA00977"/>
<dbReference type="Proteomes" id="UP000000805">
    <property type="component" value="Chromosome"/>
</dbReference>
<dbReference type="GO" id="GO:0005886">
    <property type="term" value="C:plasma membrane"/>
    <property type="evidence" value="ECO:0007669"/>
    <property type="project" value="UniProtKB-SubCell"/>
</dbReference>
<dbReference type="GO" id="GO:0046872">
    <property type="term" value="F:metal ion binding"/>
    <property type="evidence" value="ECO:0007669"/>
    <property type="project" value="UniProtKB-KW"/>
</dbReference>
<dbReference type="GO" id="GO:0004576">
    <property type="term" value="F:oligosaccharyl transferase activity"/>
    <property type="evidence" value="ECO:0007669"/>
    <property type="project" value="InterPro"/>
</dbReference>
<dbReference type="GO" id="GO:0006486">
    <property type="term" value="P:protein glycosylation"/>
    <property type="evidence" value="ECO:0007669"/>
    <property type="project" value="UniProtKB-UniPathway"/>
</dbReference>
<dbReference type="GO" id="GO:0045232">
    <property type="term" value="P:S-layer organization"/>
    <property type="evidence" value="ECO:0007669"/>
    <property type="project" value="UniProtKB-UniPathway"/>
</dbReference>
<dbReference type="Gene3D" id="3.40.50.12610">
    <property type="match status" value="1"/>
</dbReference>
<dbReference type="InterPro" id="IPR003674">
    <property type="entry name" value="Oligo_trans_STT3"/>
</dbReference>
<dbReference type="InterPro" id="IPR048999">
    <property type="entry name" value="STT3-PglB_core"/>
</dbReference>
<dbReference type="InterPro" id="IPR048307">
    <property type="entry name" value="STT3_N"/>
</dbReference>
<dbReference type="PANTHER" id="PTHR13872">
    <property type="entry name" value="DOLICHYL-DIPHOSPHOOLIGOSACCHARIDE--PROTEIN GLYCOSYLTRANSFERASE SUBUNIT"/>
    <property type="match status" value="1"/>
</dbReference>
<dbReference type="PANTHER" id="PTHR13872:SF1">
    <property type="entry name" value="DOLICHYL-DIPHOSPHOOLIGOSACCHARIDE--PROTEIN GLYCOSYLTRANSFERASE SUBUNIT STT3B"/>
    <property type="match status" value="1"/>
</dbReference>
<dbReference type="Pfam" id="PF02516">
    <property type="entry name" value="STT3"/>
    <property type="match status" value="1"/>
</dbReference>
<dbReference type="Pfam" id="PF21436">
    <property type="entry name" value="STT3-PglB_core"/>
    <property type="match status" value="1"/>
</dbReference>
<reference key="1">
    <citation type="journal article" date="1996" name="Science">
        <title>Complete genome sequence of the methanogenic archaeon, Methanococcus jannaschii.</title>
        <authorList>
            <person name="Bult C.J."/>
            <person name="White O."/>
            <person name="Olsen G.J."/>
            <person name="Zhou L."/>
            <person name="Fleischmann R.D."/>
            <person name="Sutton G.G."/>
            <person name="Blake J.A."/>
            <person name="FitzGerald L.M."/>
            <person name="Clayton R.A."/>
            <person name="Gocayne J.D."/>
            <person name="Kerlavage A.R."/>
            <person name="Dougherty B.A."/>
            <person name="Tomb J.-F."/>
            <person name="Adams M.D."/>
            <person name="Reich C.I."/>
            <person name="Overbeek R."/>
            <person name="Kirkness E.F."/>
            <person name="Weinstock K.G."/>
            <person name="Merrick J.M."/>
            <person name="Glodek A."/>
            <person name="Scott J.L."/>
            <person name="Geoghagen N.S.M."/>
            <person name="Weidman J.F."/>
            <person name="Fuhrmann J.L."/>
            <person name="Nguyen D."/>
            <person name="Utterback T.R."/>
            <person name="Kelley J.M."/>
            <person name="Peterson J.D."/>
            <person name="Sadow P.W."/>
            <person name="Hanna M.C."/>
            <person name="Cotton M.D."/>
            <person name="Roberts K.M."/>
            <person name="Hurst M.A."/>
            <person name="Kaine B.P."/>
            <person name="Borodovsky M."/>
            <person name="Klenk H.-P."/>
            <person name="Fraser C.M."/>
            <person name="Smith H.O."/>
            <person name="Woese C.R."/>
            <person name="Venter J.C."/>
        </authorList>
    </citation>
    <scope>NUCLEOTIDE SEQUENCE [LARGE SCALE GENOMIC DNA]</scope>
    <source>
        <strain>ATCC 43067 / DSM 2661 / JAL-1 / JCM 10045 / NBRC 100440</strain>
    </source>
</reference>
<name>AGLB_METJA</name>
<comment type="function">
    <text evidence="4">Oligosaccharyl transferase (OST) that catalyzes the initial transfer of a defined glycan (ManNAcGlc-2,3-diNAcAGlcNAc in Methanococci) from the lipid carrier dolichol-monophosphate to an asparagine residue within an Asn-X-Ser/Thr consensus motif in nascent polypeptide chains, the first step in protein N-glycosylation. Involved in the assembly of an N-linked disaccharide that decorates the S-layer glycoprotein and flagellins.</text>
</comment>
<comment type="catalytic activity">
    <reaction evidence="4">
        <text>an archaeal dolichyl phosphooligosaccharide + [protein]-L-asparagine = an archaeal dolichyl phosphate + a glycoprotein with the oligosaccharide chain attached by N-beta-D-glycosyl linkage to a protein L-asparagine.</text>
        <dbReference type="EC" id="2.4.99.21"/>
    </reaction>
</comment>
<comment type="cofactor">
    <cofactor evidence="4">
        <name>Mn(2+)</name>
        <dbReference type="ChEBI" id="CHEBI:29035"/>
    </cofactor>
    <cofactor evidence="2">
        <name>Mg(2+)</name>
        <dbReference type="ChEBI" id="CHEBI:18420"/>
    </cofactor>
</comment>
<comment type="pathway">
    <text evidence="4">Cell surface structure biogenesis; S-layer biogenesis.</text>
</comment>
<comment type="pathway">
    <text evidence="4">Protein modification; protein glycosylation.</text>
</comment>
<comment type="subcellular location">
    <subcellularLocation>
        <location evidence="4">Cell membrane</location>
        <topology evidence="4">Multi-pass membrane protein</topology>
    </subcellularLocation>
</comment>
<comment type="domain">
    <text evidence="2">Despite low primary sequence conservation between eukaryotic catalytic subunits and bacterial and archaeal single subunit OSTs (ssOST), structural comparison revealed several common motifs at spatially equivalent positions, like the DXD motif 1 on the external loop 1 and the DXD motif 2 on the external loop 2 involved in binding of the metal ion cofactor and the carboxamide group of the acceptor asparagine, the conserved Glu residue of the TIXE/SVSE motif on the external loop 5 involved in catalysis, as well as the WWDYG and the DK/MI motifs in the globular domain that define the binding pocket for the +2 Ser/Thr of the acceptor sequon. In bacterial ssOSTs, an Arg residue was found to interact with a negatively charged side chain at the -2 position of the sequon. This Arg is conserved in bacterial enzymes and correlates with an extended sequon requirement (Asp-X-Asn-X-Ser/Thr) for bacterial N-glycosylation.</text>
</comment>
<comment type="similarity">
    <text evidence="6">Belongs to the STT3 family.</text>
</comment>